<proteinExistence type="inferred from homology"/>
<dbReference type="EC" id="1.6.5.-" evidence="1"/>
<dbReference type="EC" id="1.7.1.17" evidence="1"/>
<dbReference type="EMBL" id="BA000004">
    <property type="protein sequence ID" value="BAB07762.1"/>
    <property type="molecule type" value="Genomic_DNA"/>
</dbReference>
<dbReference type="PIR" id="C84155">
    <property type="entry name" value="C84155"/>
</dbReference>
<dbReference type="RefSeq" id="WP_010900167.1">
    <property type="nucleotide sequence ID" value="NC_002570.2"/>
</dbReference>
<dbReference type="SMR" id="Q9K5P5"/>
<dbReference type="KEGG" id="bha:BH4043"/>
<dbReference type="eggNOG" id="COG1182">
    <property type="taxonomic scope" value="Bacteria"/>
</dbReference>
<dbReference type="HOGENOM" id="CLU_088964_3_1_9"/>
<dbReference type="OrthoDB" id="9805013at2"/>
<dbReference type="Proteomes" id="UP000001258">
    <property type="component" value="Chromosome"/>
</dbReference>
<dbReference type="GO" id="GO:0009055">
    <property type="term" value="F:electron transfer activity"/>
    <property type="evidence" value="ECO:0007669"/>
    <property type="project" value="UniProtKB-UniRule"/>
</dbReference>
<dbReference type="GO" id="GO:0010181">
    <property type="term" value="F:FMN binding"/>
    <property type="evidence" value="ECO:0007669"/>
    <property type="project" value="UniProtKB-UniRule"/>
</dbReference>
<dbReference type="GO" id="GO:0016652">
    <property type="term" value="F:oxidoreductase activity, acting on NAD(P)H as acceptor"/>
    <property type="evidence" value="ECO:0007669"/>
    <property type="project" value="UniProtKB-UniRule"/>
</dbReference>
<dbReference type="GO" id="GO:0016655">
    <property type="term" value="F:oxidoreductase activity, acting on NAD(P)H, quinone or similar compound as acceptor"/>
    <property type="evidence" value="ECO:0007669"/>
    <property type="project" value="InterPro"/>
</dbReference>
<dbReference type="Gene3D" id="3.40.50.360">
    <property type="match status" value="1"/>
</dbReference>
<dbReference type="HAMAP" id="MF_01216">
    <property type="entry name" value="Azoreductase_type1"/>
    <property type="match status" value="1"/>
</dbReference>
<dbReference type="InterPro" id="IPR003680">
    <property type="entry name" value="Flavodoxin_fold"/>
</dbReference>
<dbReference type="InterPro" id="IPR029039">
    <property type="entry name" value="Flavoprotein-like_sf"/>
</dbReference>
<dbReference type="InterPro" id="IPR050104">
    <property type="entry name" value="FMN-dep_NADH:Q_OxRdtase_AzoR1"/>
</dbReference>
<dbReference type="InterPro" id="IPR023048">
    <property type="entry name" value="NADH:quinone_OxRdtase_FMN_depd"/>
</dbReference>
<dbReference type="NCBIfam" id="NF010075">
    <property type="entry name" value="PRK13556.1"/>
    <property type="match status" value="1"/>
</dbReference>
<dbReference type="PANTHER" id="PTHR43741">
    <property type="entry name" value="FMN-DEPENDENT NADH-AZOREDUCTASE 1"/>
    <property type="match status" value="1"/>
</dbReference>
<dbReference type="PANTHER" id="PTHR43741:SF7">
    <property type="entry name" value="FMN-DEPENDENT NADH:QUINONE OXIDOREDUCTASE"/>
    <property type="match status" value="1"/>
</dbReference>
<dbReference type="Pfam" id="PF02525">
    <property type="entry name" value="Flavodoxin_2"/>
    <property type="match status" value="1"/>
</dbReference>
<dbReference type="SUPFAM" id="SSF52218">
    <property type="entry name" value="Flavoproteins"/>
    <property type="match status" value="1"/>
</dbReference>
<organism>
    <name type="scientific">Halalkalibacterium halodurans (strain ATCC BAA-125 / DSM 18197 / FERM 7344 / JCM 9153 / C-125)</name>
    <name type="common">Bacillus halodurans</name>
    <dbReference type="NCBI Taxonomy" id="272558"/>
    <lineage>
        <taxon>Bacteria</taxon>
        <taxon>Bacillati</taxon>
        <taxon>Bacillota</taxon>
        <taxon>Bacilli</taxon>
        <taxon>Bacillales</taxon>
        <taxon>Bacillaceae</taxon>
        <taxon>Halalkalibacterium (ex Joshi et al. 2022)</taxon>
    </lineage>
</organism>
<comment type="function">
    <text evidence="1">Quinone reductase that provides resistance to thiol-specific stress caused by electrophilic quinones.</text>
</comment>
<comment type="function">
    <text evidence="1">Also exhibits azoreductase activity. Catalyzes the reductive cleavage of the azo bond in aromatic azo compounds to the corresponding amines.</text>
</comment>
<comment type="catalytic activity">
    <reaction evidence="1">
        <text>2 a quinone + NADH + H(+) = 2 a 1,4-benzosemiquinone + NAD(+)</text>
        <dbReference type="Rhea" id="RHEA:65952"/>
        <dbReference type="ChEBI" id="CHEBI:15378"/>
        <dbReference type="ChEBI" id="CHEBI:57540"/>
        <dbReference type="ChEBI" id="CHEBI:57945"/>
        <dbReference type="ChEBI" id="CHEBI:132124"/>
        <dbReference type="ChEBI" id="CHEBI:134225"/>
    </reaction>
</comment>
<comment type="catalytic activity">
    <reaction evidence="1">
        <text>N,N-dimethyl-1,4-phenylenediamine + anthranilate + 2 NAD(+) = 2-(4-dimethylaminophenyl)diazenylbenzoate + 2 NADH + 2 H(+)</text>
        <dbReference type="Rhea" id="RHEA:55872"/>
        <dbReference type="ChEBI" id="CHEBI:15378"/>
        <dbReference type="ChEBI" id="CHEBI:15783"/>
        <dbReference type="ChEBI" id="CHEBI:16567"/>
        <dbReference type="ChEBI" id="CHEBI:57540"/>
        <dbReference type="ChEBI" id="CHEBI:57945"/>
        <dbReference type="ChEBI" id="CHEBI:71579"/>
        <dbReference type="EC" id="1.7.1.17"/>
    </reaction>
</comment>
<comment type="cofactor">
    <cofactor evidence="1">
        <name>FMN</name>
        <dbReference type="ChEBI" id="CHEBI:58210"/>
    </cofactor>
    <text evidence="1">Binds 1 FMN per subunit.</text>
</comment>
<comment type="subunit">
    <text evidence="1">Homodimer.</text>
</comment>
<comment type="similarity">
    <text evidence="1">Belongs to the azoreductase type 1 family.</text>
</comment>
<protein>
    <recommendedName>
        <fullName evidence="1">FMN-dependent NADH:quinone oxidoreductase 3</fullName>
        <ecNumber evidence="1">1.6.5.-</ecNumber>
    </recommendedName>
    <alternativeName>
        <fullName evidence="1">Azo-dye reductase 3</fullName>
    </alternativeName>
    <alternativeName>
        <fullName evidence="1">FMN-dependent NADH-azo compound oxidoreductase 3</fullName>
    </alternativeName>
    <alternativeName>
        <fullName evidence="1">FMN-dependent NADH-azoreductase 3</fullName>
        <ecNumber evidence="1">1.7.1.17</ecNumber>
    </alternativeName>
</protein>
<name>AZOR3_HALH5</name>
<reference key="1">
    <citation type="journal article" date="2000" name="Nucleic Acids Res.">
        <title>Complete genome sequence of the alkaliphilic bacterium Bacillus halodurans and genomic sequence comparison with Bacillus subtilis.</title>
        <authorList>
            <person name="Takami H."/>
            <person name="Nakasone K."/>
            <person name="Takaki Y."/>
            <person name="Maeno G."/>
            <person name="Sasaki R."/>
            <person name="Masui N."/>
            <person name="Fuji F."/>
            <person name="Hirama C."/>
            <person name="Nakamura Y."/>
            <person name="Ogasawara N."/>
            <person name="Kuhara S."/>
            <person name="Horikoshi K."/>
        </authorList>
    </citation>
    <scope>NUCLEOTIDE SEQUENCE [LARGE SCALE GENOMIC DNA]</scope>
    <source>
        <strain>ATCC BAA-125 / DSM 18197 / FERM 7344 / JCM 9153 / C-125</strain>
    </source>
</reference>
<gene>
    <name evidence="1" type="primary">azoR3</name>
    <name type="ordered locus">BH4043</name>
</gene>
<keyword id="KW-0285">Flavoprotein</keyword>
<keyword id="KW-0288">FMN</keyword>
<keyword id="KW-0520">NAD</keyword>
<keyword id="KW-0560">Oxidoreductase</keyword>
<keyword id="KW-1185">Reference proteome</keyword>
<feature type="chain" id="PRO_0000166326" description="FMN-dependent NADH:quinone oxidoreductase 3">
    <location>
        <begin position="1"/>
        <end position="211"/>
    </location>
</feature>
<feature type="binding site" evidence="1">
    <location>
        <begin position="17"/>
        <end position="19"/>
    </location>
    <ligand>
        <name>FMN</name>
        <dbReference type="ChEBI" id="CHEBI:58210"/>
    </ligand>
</feature>
<accession>Q9K5P5</accession>
<sequence length="211" mass="23716">MAKVLYITAHPLNEEQSFSLAAGTAFIETYKEEHKDDEVIHLDLYKEEIPHIDAHVFSGWGKLQNNKGFEELSQEEQAKVGRLSELSEQFVAADKYVFVTPLWNFSFPPVLKAYIDAVAVAGKTFKYTEQGPVGLLTDKKALHIQARGGIYSEGPATDFEMGHRYLTAIMNFFGVPSFQGLFIEGHAAMPDKAQEIKEDGIRRAKELARTF</sequence>
<evidence type="ECO:0000255" key="1">
    <source>
        <dbReference type="HAMAP-Rule" id="MF_01216"/>
    </source>
</evidence>